<keyword id="KW-0030">Aminoacyl-tRNA synthetase</keyword>
<keyword id="KW-0067">ATP-binding</keyword>
<keyword id="KW-0963">Cytoplasm</keyword>
<keyword id="KW-0436">Ligase</keyword>
<keyword id="KW-0479">Metal-binding</keyword>
<keyword id="KW-0547">Nucleotide-binding</keyword>
<keyword id="KW-0648">Protein biosynthesis</keyword>
<keyword id="KW-1185">Reference proteome</keyword>
<keyword id="KW-0862">Zinc</keyword>
<gene>
    <name evidence="1" type="primary">cysS</name>
    <name type="ordered locus">Sama_1221</name>
</gene>
<sequence>MLKIYNSISRQKEEFKPIQPGKIGMYVCGVTIYDLCHIGHGRTFVCFDMIVRYLRYRGYEVNYQRNITDVDDKIIKRANENGESCDSLTERLIGEMHADFDALNMVRPSFEPRATLHIDEIIDMVTRLLDRGHAYVAADGDVLFDVSSYAAYGRLSGQDLEQLQAGARVEVDENKRNPMDFVLWKMSKPGEPTWDSPWGPGRPGWHIECSAMNSKHLGLHFDIHGGGSDLQFPHHENEIAQSCCAHDTPYVNTWMHTGMVMVDREKMSKSLGNFFTIRDVLAHYDAQTVRYFLLSGHYRSQLNYSEDNLKQARASLERMYTALKGLDLTVEAAGADEFVSRFMAAMDDDFNTPEAYSVLFDMVREINRLKTSDMAAASQLGVALKELAEVLGILSSTPEAFLQGEGNADEVAEIEALIVERNRARAEKDWPAADVARDRLNALGVVLEDGPEGTTWRKK</sequence>
<organism>
    <name type="scientific">Shewanella amazonensis (strain ATCC BAA-1098 / SB2B)</name>
    <dbReference type="NCBI Taxonomy" id="326297"/>
    <lineage>
        <taxon>Bacteria</taxon>
        <taxon>Pseudomonadati</taxon>
        <taxon>Pseudomonadota</taxon>
        <taxon>Gammaproteobacteria</taxon>
        <taxon>Alteromonadales</taxon>
        <taxon>Shewanellaceae</taxon>
        <taxon>Shewanella</taxon>
    </lineage>
</organism>
<evidence type="ECO:0000255" key="1">
    <source>
        <dbReference type="HAMAP-Rule" id="MF_00041"/>
    </source>
</evidence>
<feature type="chain" id="PRO_0000332897" description="Cysteine--tRNA ligase">
    <location>
        <begin position="1"/>
        <end position="459"/>
    </location>
</feature>
<feature type="short sequence motif" description="'HIGH' region">
    <location>
        <begin position="30"/>
        <end position="40"/>
    </location>
</feature>
<feature type="short sequence motif" description="'KMSKS' region">
    <location>
        <begin position="266"/>
        <end position="270"/>
    </location>
</feature>
<feature type="binding site" evidence="1">
    <location>
        <position position="28"/>
    </location>
    <ligand>
        <name>Zn(2+)</name>
        <dbReference type="ChEBI" id="CHEBI:29105"/>
    </ligand>
</feature>
<feature type="binding site" evidence="1">
    <location>
        <position position="209"/>
    </location>
    <ligand>
        <name>Zn(2+)</name>
        <dbReference type="ChEBI" id="CHEBI:29105"/>
    </ligand>
</feature>
<feature type="binding site" evidence="1">
    <location>
        <position position="234"/>
    </location>
    <ligand>
        <name>Zn(2+)</name>
        <dbReference type="ChEBI" id="CHEBI:29105"/>
    </ligand>
</feature>
<feature type="binding site" evidence="1">
    <location>
        <position position="238"/>
    </location>
    <ligand>
        <name>Zn(2+)</name>
        <dbReference type="ChEBI" id="CHEBI:29105"/>
    </ligand>
</feature>
<feature type="binding site" evidence="1">
    <location>
        <position position="269"/>
    </location>
    <ligand>
        <name>ATP</name>
        <dbReference type="ChEBI" id="CHEBI:30616"/>
    </ligand>
</feature>
<name>SYC_SHEAM</name>
<protein>
    <recommendedName>
        <fullName evidence="1">Cysteine--tRNA ligase</fullName>
        <ecNumber evidence="1">6.1.1.16</ecNumber>
    </recommendedName>
    <alternativeName>
        <fullName evidence="1">Cysteinyl-tRNA synthetase</fullName>
        <shortName evidence="1">CysRS</shortName>
    </alternativeName>
</protein>
<proteinExistence type="inferred from homology"/>
<reference key="1">
    <citation type="submission" date="2006-12" db="EMBL/GenBank/DDBJ databases">
        <title>Complete sequence of Shewanella amazonensis SB2B.</title>
        <authorList>
            <consortium name="US DOE Joint Genome Institute"/>
            <person name="Copeland A."/>
            <person name="Lucas S."/>
            <person name="Lapidus A."/>
            <person name="Barry K."/>
            <person name="Detter J.C."/>
            <person name="Glavina del Rio T."/>
            <person name="Hammon N."/>
            <person name="Israni S."/>
            <person name="Dalin E."/>
            <person name="Tice H."/>
            <person name="Pitluck S."/>
            <person name="Munk A.C."/>
            <person name="Brettin T."/>
            <person name="Bruce D."/>
            <person name="Han C."/>
            <person name="Tapia R."/>
            <person name="Gilna P."/>
            <person name="Schmutz J."/>
            <person name="Larimer F."/>
            <person name="Land M."/>
            <person name="Hauser L."/>
            <person name="Kyrpides N."/>
            <person name="Mikhailova N."/>
            <person name="Fredrickson J."/>
            <person name="Richardson P."/>
        </authorList>
    </citation>
    <scope>NUCLEOTIDE SEQUENCE [LARGE SCALE GENOMIC DNA]</scope>
    <source>
        <strain>ATCC BAA-1098 / SB2B</strain>
    </source>
</reference>
<dbReference type="EC" id="6.1.1.16" evidence="1"/>
<dbReference type="EMBL" id="CP000507">
    <property type="protein sequence ID" value="ABL99428.1"/>
    <property type="molecule type" value="Genomic_DNA"/>
</dbReference>
<dbReference type="RefSeq" id="WP_011759337.1">
    <property type="nucleotide sequence ID" value="NC_008700.1"/>
</dbReference>
<dbReference type="SMR" id="A1S4X2"/>
<dbReference type="STRING" id="326297.Sama_1221"/>
<dbReference type="KEGG" id="saz:Sama_1221"/>
<dbReference type="eggNOG" id="COG0215">
    <property type="taxonomic scope" value="Bacteria"/>
</dbReference>
<dbReference type="HOGENOM" id="CLU_013528_0_1_6"/>
<dbReference type="OrthoDB" id="9815130at2"/>
<dbReference type="Proteomes" id="UP000009175">
    <property type="component" value="Chromosome"/>
</dbReference>
<dbReference type="GO" id="GO:0005829">
    <property type="term" value="C:cytosol"/>
    <property type="evidence" value="ECO:0007669"/>
    <property type="project" value="TreeGrafter"/>
</dbReference>
<dbReference type="GO" id="GO:0005524">
    <property type="term" value="F:ATP binding"/>
    <property type="evidence" value="ECO:0007669"/>
    <property type="project" value="UniProtKB-UniRule"/>
</dbReference>
<dbReference type="GO" id="GO:0004817">
    <property type="term" value="F:cysteine-tRNA ligase activity"/>
    <property type="evidence" value="ECO:0007669"/>
    <property type="project" value="UniProtKB-UniRule"/>
</dbReference>
<dbReference type="GO" id="GO:0008270">
    <property type="term" value="F:zinc ion binding"/>
    <property type="evidence" value="ECO:0007669"/>
    <property type="project" value="UniProtKB-UniRule"/>
</dbReference>
<dbReference type="GO" id="GO:0006423">
    <property type="term" value="P:cysteinyl-tRNA aminoacylation"/>
    <property type="evidence" value="ECO:0007669"/>
    <property type="project" value="UniProtKB-UniRule"/>
</dbReference>
<dbReference type="CDD" id="cd07963">
    <property type="entry name" value="Anticodon_Ia_Cys"/>
    <property type="match status" value="1"/>
</dbReference>
<dbReference type="CDD" id="cd00672">
    <property type="entry name" value="CysRS_core"/>
    <property type="match status" value="1"/>
</dbReference>
<dbReference type="FunFam" id="1.20.120.1910:FF:000001">
    <property type="entry name" value="Cysteine--tRNA ligase"/>
    <property type="match status" value="1"/>
</dbReference>
<dbReference type="FunFam" id="3.40.50.620:FF:000009">
    <property type="entry name" value="Cysteine--tRNA ligase"/>
    <property type="match status" value="1"/>
</dbReference>
<dbReference type="Gene3D" id="1.20.120.1910">
    <property type="entry name" value="Cysteine-tRNA ligase, C-terminal anti-codon recognition domain"/>
    <property type="match status" value="1"/>
</dbReference>
<dbReference type="Gene3D" id="3.40.50.620">
    <property type="entry name" value="HUPs"/>
    <property type="match status" value="1"/>
</dbReference>
<dbReference type="HAMAP" id="MF_00041">
    <property type="entry name" value="Cys_tRNA_synth"/>
    <property type="match status" value="1"/>
</dbReference>
<dbReference type="InterPro" id="IPR015803">
    <property type="entry name" value="Cys-tRNA-ligase"/>
</dbReference>
<dbReference type="InterPro" id="IPR015273">
    <property type="entry name" value="Cys-tRNA-synt_Ia_DALR"/>
</dbReference>
<dbReference type="InterPro" id="IPR024909">
    <property type="entry name" value="Cys-tRNA/MSH_ligase"/>
</dbReference>
<dbReference type="InterPro" id="IPR056411">
    <property type="entry name" value="CysS_C"/>
</dbReference>
<dbReference type="InterPro" id="IPR014729">
    <property type="entry name" value="Rossmann-like_a/b/a_fold"/>
</dbReference>
<dbReference type="InterPro" id="IPR032678">
    <property type="entry name" value="tRNA-synt_1_cat_dom"/>
</dbReference>
<dbReference type="InterPro" id="IPR009080">
    <property type="entry name" value="tRNAsynth_Ia_anticodon-bd"/>
</dbReference>
<dbReference type="NCBIfam" id="TIGR00435">
    <property type="entry name" value="cysS"/>
    <property type="match status" value="1"/>
</dbReference>
<dbReference type="PANTHER" id="PTHR10890:SF3">
    <property type="entry name" value="CYSTEINE--TRNA LIGASE, CYTOPLASMIC"/>
    <property type="match status" value="1"/>
</dbReference>
<dbReference type="PANTHER" id="PTHR10890">
    <property type="entry name" value="CYSTEINYL-TRNA SYNTHETASE"/>
    <property type="match status" value="1"/>
</dbReference>
<dbReference type="Pfam" id="PF23493">
    <property type="entry name" value="CysS_C"/>
    <property type="match status" value="1"/>
</dbReference>
<dbReference type="Pfam" id="PF09190">
    <property type="entry name" value="DALR_2"/>
    <property type="match status" value="1"/>
</dbReference>
<dbReference type="Pfam" id="PF01406">
    <property type="entry name" value="tRNA-synt_1e"/>
    <property type="match status" value="1"/>
</dbReference>
<dbReference type="PRINTS" id="PR00983">
    <property type="entry name" value="TRNASYNTHCYS"/>
</dbReference>
<dbReference type="SMART" id="SM00840">
    <property type="entry name" value="DALR_2"/>
    <property type="match status" value="1"/>
</dbReference>
<dbReference type="SUPFAM" id="SSF47323">
    <property type="entry name" value="Anticodon-binding domain of a subclass of class I aminoacyl-tRNA synthetases"/>
    <property type="match status" value="1"/>
</dbReference>
<dbReference type="SUPFAM" id="SSF52374">
    <property type="entry name" value="Nucleotidylyl transferase"/>
    <property type="match status" value="1"/>
</dbReference>
<accession>A1S4X2</accession>
<comment type="catalytic activity">
    <reaction evidence="1">
        <text>tRNA(Cys) + L-cysteine + ATP = L-cysteinyl-tRNA(Cys) + AMP + diphosphate</text>
        <dbReference type="Rhea" id="RHEA:17773"/>
        <dbReference type="Rhea" id="RHEA-COMP:9661"/>
        <dbReference type="Rhea" id="RHEA-COMP:9679"/>
        <dbReference type="ChEBI" id="CHEBI:30616"/>
        <dbReference type="ChEBI" id="CHEBI:33019"/>
        <dbReference type="ChEBI" id="CHEBI:35235"/>
        <dbReference type="ChEBI" id="CHEBI:78442"/>
        <dbReference type="ChEBI" id="CHEBI:78517"/>
        <dbReference type="ChEBI" id="CHEBI:456215"/>
        <dbReference type="EC" id="6.1.1.16"/>
    </reaction>
</comment>
<comment type="cofactor">
    <cofactor evidence="1">
        <name>Zn(2+)</name>
        <dbReference type="ChEBI" id="CHEBI:29105"/>
    </cofactor>
    <text evidence="1">Binds 1 zinc ion per subunit.</text>
</comment>
<comment type="subunit">
    <text evidence="1">Monomer.</text>
</comment>
<comment type="subcellular location">
    <subcellularLocation>
        <location evidence="1">Cytoplasm</location>
    </subcellularLocation>
</comment>
<comment type="similarity">
    <text evidence="1">Belongs to the class-I aminoacyl-tRNA synthetase family.</text>
</comment>